<proteinExistence type="inferred from homology"/>
<comment type="function">
    <text evidence="1">Catalyzes the NAD(P)-dependent oxidation of 4-(phosphooxy)-L-threonine (HTP) into 2-amino-3-oxo-4-(phosphooxy)butyric acid which spontaneously decarboxylates to form 3-amino-2-oxopropyl phosphate (AHAP).</text>
</comment>
<comment type="catalytic activity">
    <reaction evidence="1">
        <text>4-(phosphooxy)-L-threonine + NAD(+) = 3-amino-2-oxopropyl phosphate + CO2 + NADH</text>
        <dbReference type="Rhea" id="RHEA:32275"/>
        <dbReference type="ChEBI" id="CHEBI:16526"/>
        <dbReference type="ChEBI" id="CHEBI:57279"/>
        <dbReference type="ChEBI" id="CHEBI:57540"/>
        <dbReference type="ChEBI" id="CHEBI:57945"/>
        <dbReference type="ChEBI" id="CHEBI:58452"/>
        <dbReference type="EC" id="1.1.1.262"/>
    </reaction>
</comment>
<comment type="cofactor">
    <cofactor evidence="1">
        <name>a divalent metal cation</name>
        <dbReference type="ChEBI" id="CHEBI:60240"/>
    </cofactor>
    <text evidence="1">Binds 1 divalent metal cation per subunit.</text>
</comment>
<comment type="pathway">
    <text evidence="1">Cofactor biosynthesis; pyridoxine 5'-phosphate biosynthesis; pyridoxine 5'-phosphate from D-erythrose 4-phosphate: step 4/5.</text>
</comment>
<comment type="subunit">
    <text evidence="1">Homodimer.</text>
</comment>
<comment type="subcellular location">
    <subcellularLocation>
        <location evidence="1">Cytoplasm</location>
    </subcellularLocation>
</comment>
<comment type="miscellaneous">
    <text evidence="1">The active site is located at the dimer interface.</text>
</comment>
<comment type="similarity">
    <text evidence="2">Belongs to the PdxA family.</text>
</comment>
<gene>
    <name evidence="1" type="primary">pdxA</name>
    <name type="ordered locus">aq_852</name>
</gene>
<protein>
    <recommendedName>
        <fullName evidence="1">4-hydroxythreonine-4-phosphate dehydrogenase</fullName>
        <ecNumber evidence="1">1.1.1.262</ecNumber>
    </recommendedName>
    <alternativeName>
        <fullName evidence="1">4-(phosphohydroxy)-L-threonine dehydrogenase</fullName>
    </alternativeName>
</protein>
<name>PDXA_AQUAE</name>
<evidence type="ECO:0000250" key="1">
    <source>
        <dbReference type="UniProtKB" id="P19624"/>
    </source>
</evidence>
<evidence type="ECO:0000305" key="2"/>
<dbReference type="EC" id="1.1.1.262" evidence="1"/>
<dbReference type="EMBL" id="AE000657">
    <property type="protein sequence ID" value="AAC06973.1"/>
    <property type="molecule type" value="Genomic_DNA"/>
</dbReference>
<dbReference type="PIR" id="H70373">
    <property type="entry name" value="H70373"/>
</dbReference>
<dbReference type="RefSeq" id="NP_213580.1">
    <property type="nucleotide sequence ID" value="NC_000918.1"/>
</dbReference>
<dbReference type="RefSeq" id="WP_010880518.1">
    <property type="nucleotide sequence ID" value="NC_000918.1"/>
</dbReference>
<dbReference type="SMR" id="O67019"/>
<dbReference type="FunCoup" id="O67019">
    <property type="interactions" value="245"/>
</dbReference>
<dbReference type="STRING" id="224324.aq_852"/>
<dbReference type="EnsemblBacteria" id="AAC06973">
    <property type="protein sequence ID" value="AAC06973"/>
    <property type="gene ID" value="aq_852"/>
</dbReference>
<dbReference type="KEGG" id="aae:aq_852"/>
<dbReference type="PATRIC" id="fig|224324.8.peg.667"/>
<dbReference type="eggNOG" id="COG1995">
    <property type="taxonomic scope" value="Bacteria"/>
</dbReference>
<dbReference type="HOGENOM" id="CLU_040168_0_0_0"/>
<dbReference type="InParanoid" id="O67019"/>
<dbReference type="OrthoDB" id="9801783at2"/>
<dbReference type="UniPathway" id="UPA00244">
    <property type="reaction ID" value="UER00312"/>
</dbReference>
<dbReference type="Proteomes" id="UP000000798">
    <property type="component" value="Chromosome"/>
</dbReference>
<dbReference type="GO" id="GO:0005737">
    <property type="term" value="C:cytoplasm"/>
    <property type="evidence" value="ECO:0007669"/>
    <property type="project" value="UniProtKB-SubCell"/>
</dbReference>
<dbReference type="GO" id="GO:0050570">
    <property type="term" value="F:4-hydroxythreonine-4-phosphate dehydrogenase activity"/>
    <property type="evidence" value="ECO:0007669"/>
    <property type="project" value="UniProtKB-EC"/>
</dbReference>
<dbReference type="GO" id="GO:0046872">
    <property type="term" value="F:metal ion binding"/>
    <property type="evidence" value="ECO:0007669"/>
    <property type="project" value="UniProtKB-KW"/>
</dbReference>
<dbReference type="GO" id="GO:0051287">
    <property type="term" value="F:NAD binding"/>
    <property type="evidence" value="ECO:0007669"/>
    <property type="project" value="InterPro"/>
</dbReference>
<dbReference type="GO" id="GO:0008615">
    <property type="term" value="P:pyridoxine biosynthetic process"/>
    <property type="evidence" value="ECO:0007669"/>
    <property type="project" value="UniProtKB-KW"/>
</dbReference>
<dbReference type="Gene3D" id="3.40.718.10">
    <property type="entry name" value="Isopropylmalate Dehydrogenase"/>
    <property type="match status" value="1"/>
</dbReference>
<dbReference type="InterPro" id="IPR005255">
    <property type="entry name" value="PdxA_fam"/>
</dbReference>
<dbReference type="NCBIfam" id="TIGR00557">
    <property type="entry name" value="pdxA"/>
    <property type="match status" value="1"/>
</dbReference>
<dbReference type="PANTHER" id="PTHR30004">
    <property type="entry name" value="4-HYDROXYTHREONINE-4-PHOSPHATE DEHYDROGENASE"/>
    <property type="match status" value="1"/>
</dbReference>
<dbReference type="PANTHER" id="PTHR30004:SF6">
    <property type="entry name" value="D-THREONATE 4-PHOSPHATE DEHYDROGENASE"/>
    <property type="match status" value="1"/>
</dbReference>
<dbReference type="Pfam" id="PF04166">
    <property type="entry name" value="PdxA"/>
    <property type="match status" value="1"/>
</dbReference>
<dbReference type="SUPFAM" id="SSF53659">
    <property type="entry name" value="Isocitrate/Isopropylmalate dehydrogenase-like"/>
    <property type="match status" value="1"/>
</dbReference>
<sequence length="320" mass="35914">MNKKIGITLGDPAGIGPELILKISKHFKEKFTYVIYGEEKTLLEASKLTGIKLNYKKIEKVEEAKERGVYLIDLNVLKVPVVEPSVSSGKAAVAYLARAVADAIRGNIHGILTMPINKFWAKKAGFQYEGQTEFLAKASGTKDYAMMMYSEKLKVVLLTTHIPLKDVPNYVKKEEILKKVRLIRKEFLEKFKFEPLIKVLGLNPHAGEMGELGREEIEEIIPAVEEAKKEGIKVVGPLVPDVAFINPSEEDVFLCMYHDQGLIPFKMLAFDEGVNFTLGLPFIRTSPDHGTAYDIAWKNKARESSSLHALRLIEDLLDKI</sequence>
<reference key="1">
    <citation type="journal article" date="1998" name="Nature">
        <title>The complete genome of the hyperthermophilic bacterium Aquifex aeolicus.</title>
        <authorList>
            <person name="Deckert G."/>
            <person name="Warren P.V."/>
            <person name="Gaasterland T."/>
            <person name="Young W.G."/>
            <person name="Lenox A.L."/>
            <person name="Graham D.E."/>
            <person name="Overbeek R."/>
            <person name="Snead M.A."/>
            <person name="Keller M."/>
            <person name="Aujay M."/>
            <person name="Huber R."/>
            <person name="Feldman R.A."/>
            <person name="Short J.M."/>
            <person name="Olsen G.J."/>
            <person name="Swanson R.V."/>
        </authorList>
    </citation>
    <scope>NUCLEOTIDE SEQUENCE [LARGE SCALE GENOMIC DNA]</scope>
    <source>
        <strain>VF5</strain>
    </source>
</reference>
<organism>
    <name type="scientific">Aquifex aeolicus (strain VF5)</name>
    <dbReference type="NCBI Taxonomy" id="224324"/>
    <lineage>
        <taxon>Bacteria</taxon>
        <taxon>Pseudomonadati</taxon>
        <taxon>Aquificota</taxon>
        <taxon>Aquificia</taxon>
        <taxon>Aquificales</taxon>
        <taxon>Aquificaceae</taxon>
        <taxon>Aquifex</taxon>
    </lineage>
</organism>
<keyword id="KW-0963">Cytoplasm</keyword>
<keyword id="KW-0479">Metal-binding</keyword>
<keyword id="KW-0520">NAD</keyword>
<keyword id="KW-0521">NADP</keyword>
<keyword id="KW-0560">Oxidoreductase</keyword>
<keyword id="KW-0664">Pyridoxine biosynthesis</keyword>
<keyword id="KW-1185">Reference proteome</keyword>
<accession>O67019</accession>
<feature type="chain" id="PRO_0000188796" description="4-hydroxythreonine-4-phosphate dehydrogenase">
    <location>
        <begin position="1"/>
        <end position="320"/>
    </location>
</feature>
<feature type="binding site" evidence="1">
    <location>
        <position position="132"/>
    </location>
    <ligand>
        <name>substrate</name>
    </ligand>
</feature>
<feature type="binding site" evidence="1">
    <location>
        <position position="161"/>
    </location>
    <ligand>
        <name>a divalent metal cation</name>
        <dbReference type="ChEBI" id="CHEBI:60240"/>
        <note>ligand shared between dimeric partners</note>
    </ligand>
</feature>
<feature type="binding site" evidence="1">
    <location>
        <position position="205"/>
    </location>
    <ligand>
        <name>a divalent metal cation</name>
        <dbReference type="ChEBI" id="CHEBI:60240"/>
        <note>ligand shared between dimeric partners</note>
    </ligand>
</feature>
<feature type="binding site" evidence="1">
    <location>
        <position position="258"/>
    </location>
    <ligand>
        <name>a divalent metal cation</name>
        <dbReference type="ChEBI" id="CHEBI:60240"/>
        <note>ligand shared between dimeric partners</note>
    </ligand>
</feature>
<feature type="binding site" evidence="1">
    <location>
        <position position="266"/>
    </location>
    <ligand>
        <name>substrate</name>
    </ligand>
</feature>
<feature type="binding site" evidence="1">
    <location>
        <position position="275"/>
    </location>
    <ligand>
        <name>substrate</name>
    </ligand>
</feature>
<feature type="binding site" evidence="1">
    <location>
        <position position="284"/>
    </location>
    <ligand>
        <name>substrate</name>
    </ligand>
</feature>